<proteinExistence type="inferred from homology"/>
<dbReference type="EMBL" id="AM233362">
    <property type="protein sequence ID" value="CAJ80176.1"/>
    <property type="molecule type" value="Genomic_DNA"/>
</dbReference>
<dbReference type="RefSeq" id="WP_003017214.1">
    <property type="nucleotide sequence ID" value="NZ_CP009694.1"/>
</dbReference>
<dbReference type="SMR" id="Q2A1N4"/>
<dbReference type="KEGG" id="ftl:FTL_1737"/>
<dbReference type="Proteomes" id="UP000001944">
    <property type="component" value="Chromosome"/>
</dbReference>
<dbReference type="GO" id="GO:0005737">
    <property type="term" value="C:cytoplasm"/>
    <property type="evidence" value="ECO:0007669"/>
    <property type="project" value="UniProtKB-SubCell"/>
</dbReference>
<dbReference type="GO" id="GO:0005840">
    <property type="term" value="C:ribosome"/>
    <property type="evidence" value="ECO:0007669"/>
    <property type="project" value="InterPro"/>
</dbReference>
<dbReference type="GO" id="GO:0043022">
    <property type="term" value="F:ribosome binding"/>
    <property type="evidence" value="ECO:0007669"/>
    <property type="project" value="InterPro"/>
</dbReference>
<dbReference type="GO" id="GO:0042274">
    <property type="term" value="P:ribosomal small subunit biogenesis"/>
    <property type="evidence" value="ECO:0007669"/>
    <property type="project" value="UniProtKB-UniRule"/>
</dbReference>
<dbReference type="GO" id="GO:0006364">
    <property type="term" value="P:rRNA processing"/>
    <property type="evidence" value="ECO:0007669"/>
    <property type="project" value="UniProtKB-UniRule"/>
</dbReference>
<dbReference type="Gene3D" id="2.30.30.240">
    <property type="entry name" value="PRC-barrel domain"/>
    <property type="match status" value="1"/>
</dbReference>
<dbReference type="Gene3D" id="2.40.30.60">
    <property type="entry name" value="RimM"/>
    <property type="match status" value="1"/>
</dbReference>
<dbReference type="HAMAP" id="MF_00014">
    <property type="entry name" value="Ribosome_mat_RimM"/>
    <property type="match status" value="1"/>
</dbReference>
<dbReference type="InterPro" id="IPR011033">
    <property type="entry name" value="PRC_barrel-like_sf"/>
</dbReference>
<dbReference type="InterPro" id="IPR056792">
    <property type="entry name" value="PRC_RimM"/>
</dbReference>
<dbReference type="InterPro" id="IPR011961">
    <property type="entry name" value="RimM"/>
</dbReference>
<dbReference type="InterPro" id="IPR002676">
    <property type="entry name" value="RimM_N"/>
</dbReference>
<dbReference type="InterPro" id="IPR036976">
    <property type="entry name" value="RimM_N_sf"/>
</dbReference>
<dbReference type="InterPro" id="IPR009000">
    <property type="entry name" value="Transl_B-barrel_sf"/>
</dbReference>
<dbReference type="NCBIfam" id="TIGR02273">
    <property type="entry name" value="16S_RimM"/>
    <property type="match status" value="1"/>
</dbReference>
<dbReference type="NCBIfam" id="NF011185">
    <property type="entry name" value="PRK14591.1"/>
    <property type="match status" value="1"/>
</dbReference>
<dbReference type="PANTHER" id="PTHR33692">
    <property type="entry name" value="RIBOSOME MATURATION FACTOR RIMM"/>
    <property type="match status" value="1"/>
</dbReference>
<dbReference type="PANTHER" id="PTHR33692:SF1">
    <property type="entry name" value="RIBOSOME MATURATION FACTOR RIMM"/>
    <property type="match status" value="1"/>
</dbReference>
<dbReference type="Pfam" id="PF24986">
    <property type="entry name" value="PRC_RimM"/>
    <property type="match status" value="1"/>
</dbReference>
<dbReference type="Pfam" id="PF01782">
    <property type="entry name" value="RimM"/>
    <property type="match status" value="1"/>
</dbReference>
<dbReference type="SUPFAM" id="SSF50346">
    <property type="entry name" value="PRC-barrel domain"/>
    <property type="match status" value="1"/>
</dbReference>
<dbReference type="SUPFAM" id="SSF50447">
    <property type="entry name" value="Translation proteins"/>
    <property type="match status" value="1"/>
</dbReference>
<gene>
    <name evidence="1" type="primary">rimM</name>
    <name type="ordered locus">FTL_1737</name>
</gene>
<keyword id="KW-0143">Chaperone</keyword>
<keyword id="KW-0963">Cytoplasm</keyword>
<keyword id="KW-1185">Reference proteome</keyword>
<keyword id="KW-0690">Ribosome biogenesis</keyword>
<keyword id="KW-0698">rRNA processing</keyword>
<evidence type="ECO:0000255" key="1">
    <source>
        <dbReference type="HAMAP-Rule" id="MF_00014"/>
    </source>
</evidence>
<reference key="1">
    <citation type="submission" date="2006-03" db="EMBL/GenBank/DDBJ databases">
        <title>Complete genome sequence of Francisella tularensis LVS (Live Vaccine Strain).</title>
        <authorList>
            <person name="Chain P."/>
            <person name="Larimer F."/>
            <person name="Land M."/>
            <person name="Stilwagen S."/>
            <person name="Larsson P."/>
            <person name="Bearden S."/>
            <person name="Chu M."/>
            <person name="Oyston P."/>
            <person name="Forsman M."/>
            <person name="Andersson S."/>
            <person name="Lindler L."/>
            <person name="Titball R."/>
            <person name="Garcia E."/>
        </authorList>
    </citation>
    <scope>NUCLEOTIDE SEQUENCE [LARGE SCALE GENOMIC DNA]</scope>
    <source>
        <strain>LVS</strain>
    </source>
</reference>
<feature type="chain" id="PRO_0000244131" description="Ribosome maturation factor RimM">
    <location>
        <begin position="1"/>
        <end position="169"/>
    </location>
</feature>
<feature type="domain" description="PRC barrel" evidence="1">
    <location>
        <begin position="97"/>
        <end position="169"/>
    </location>
</feature>
<sequence length="169" mass="19123">MSQDFVEIAKIGATYKLNGELNLYPLANSIETLLSYGDWYIQLPATNVWQQLKGESVLKRADKVYIKLANINNADTAKKYVNALIGVPKRALPQLAEDEVYFKDLIGCSVKNINNDSFGVVVDIIETGANEVLVCKEDNSEYLIPYVKQYIVSEDLNSKKIVVDWEYDY</sequence>
<accession>Q2A1N4</accession>
<protein>
    <recommendedName>
        <fullName evidence="1">Ribosome maturation factor RimM</fullName>
    </recommendedName>
</protein>
<name>RIMM_FRATH</name>
<organism>
    <name type="scientific">Francisella tularensis subsp. holarctica (strain LVS)</name>
    <dbReference type="NCBI Taxonomy" id="376619"/>
    <lineage>
        <taxon>Bacteria</taxon>
        <taxon>Pseudomonadati</taxon>
        <taxon>Pseudomonadota</taxon>
        <taxon>Gammaproteobacteria</taxon>
        <taxon>Thiotrichales</taxon>
        <taxon>Francisellaceae</taxon>
        <taxon>Francisella</taxon>
    </lineage>
</organism>
<comment type="function">
    <text evidence="1">An accessory protein needed during the final step in the assembly of 30S ribosomal subunit, possibly for assembly of the head region. Essential for efficient processing of 16S rRNA. May be needed both before and after RbfA during the maturation of 16S rRNA. It has affinity for free ribosomal 30S subunits but not for 70S ribosomes.</text>
</comment>
<comment type="subunit">
    <text evidence="1">Binds ribosomal protein uS19.</text>
</comment>
<comment type="subcellular location">
    <subcellularLocation>
        <location evidence="1">Cytoplasm</location>
    </subcellularLocation>
</comment>
<comment type="domain">
    <text evidence="1">The PRC barrel domain binds ribosomal protein uS19.</text>
</comment>
<comment type="similarity">
    <text evidence="1">Belongs to the RimM family.</text>
</comment>